<keyword id="KW-0067">ATP-binding</keyword>
<keyword id="KW-0378">Hydrolase</keyword>
<keyword id="KW-0460">Magnesium</keyword>
<keyword id="KW-0479">Metal-binding</keyword>
<keyword id="KW-0511">Multifunctional enzyme</keyword>
<keyword id="KW-0533">Nickel</keyword>
<keyword id="KW-0547">Nucleotide-binding</keyword>
<keyword id="KW-0548">Nucleotidyltransferase</keyword>
<keyword id="KW-1185">Reference proteome</keyword>
<keyword id="KW-0692">RNA repair</keyword>
<keyword id="KW-0694">RNA-binding</keyword>
<keyword id="KW-0808">Transferase</keyword>
<keyword id="KW-0819">tRNA processing</keyword>
<gene>
    <name evidence="1" type="primary">cca</name>
    <name type="ordered locus">PD_0602</name>
</gene>
<comment type="function">
    <text evidence="1">Catalyzes the addition and repair of the essential 3'-terminal CCA sequence in tRNAs without using a nucleic acid template. Adds these three nucleotides in the order of C, C, and A to the tRNA nucleotide-73, using CTP and ATP as substrates and producing inorganic pyrophosphate. tRNA 3'-terminal CCA addition is required both for tRNA processing and repair. Also involved in tRNA surveillance by mediating tandem CCA addition to generate a CCACCA at the 3' terminus of unstable tRNAs. While stable tRNAs receive only 3'-terminal CCA, unstable tRNAs are marked with CCACCA and rapidly degraded.</text>
</comment>
<comment type="catalytic activity">
    <reaction evidence="1">
        <text>a tRNA precursor + 2 CTP + ATP = a tRNA with a 3' CCA end + 3 diphosphate</text>
        <dbReference type="Rhea" id="RHEA:14433"/>
        <dbReference type="Rhea" id="RHEA-COMP:10465"/>
        <dbReference type="Rhea" id="RHEA-COMP:10468"/>
        <dbReference type="ChEBI" id="CHEBI:30616"/>
        <dbReference type="ChEBI" id="CHEBI:33019"/>
        <dbReference type="ChEBI" id="CHEBI:37563"/>
        <dbReference type="ChEBI" id="CHEBI:74896"/>
        <dbReference type="ChEBI" id="CHEBI:83071"/>
        <dbReference type="EC" id="2.7.7.72"/>
    </reaction>
</comment>
<comment type="catalytic activity">
    <reaction evidence="1">
        <text>a tRNA with a 3' CCA end + 2 CTP + ATP = a tRNA with a 3' CCACCA end + 3 diphosphate</text>
        <dbReference type="Rhea" id="RHEA:76235"/>
        <dbReference type="Rhea" id="RHEA-COMP:10468"/>
        <dbReference type="Rhea" id="RHEA-COMP:18655"/>
        <dbReference type="ChEBI" id="CHEBI:30616"/>
        <dbReference type="ChEBI" id="CHEBI:33019"/>
        <dbReference type="ChEBI" id="CHEBI:37563"/>
        <dbReference type="ChEBI" id="CHEBI:83071"/>
        <dbReference type="ChEBI" id="CHEBI:195187"/>
    </reaction>
    <physiologicalReaction direction="left-to-right" evidence="1">
        <dbReference type="Rhea" id="RHEA:76236"/>
    </physiologicalReaction>
</comment>
<comment type="cofactor">
    <cofactor evidence="1">
        <name>Mg(2+)</name>
        <dbReference type="ChEBI" id="CHEBI:18420"/>
    </cofactor>
    <text evidence="1">Magnesium is required for nucleotidyltransferase activity.</text>
</comment>
<comment type="cofactor">
    <cofactor evidence="1">
        <name>Ni(2+)</name>
        <dbReference type="ChEBI" id="CHEBI:49786"/>
    </cofactor>
    <text evidence="1">Nickel for phosphatase activity.</text>
</comment>
<comment type="subunit">
    <text evidence="1">Monomer. Can also form homodimers and oligomers.</text>
</comment>
<comment type="domain">
    <text evidence="1">Comprises two domains: an N-terminal domain containing the nucleotidyltransferase activity and a C-terminal HD domain associated with both phosphodiesterase and phosphatase activities.</text>
</comment>
<comment type="miscellaneous">
    <text evidence="1">A single active site specifically recognizes both ATP and CTP and is responsible for their addition.</text>
</comment>
<comment type="similarity">
    <text evidence="1">Belongs to the tRNA nucleotidyltransferase/poly(A) polymerase family. Bacterial CCA-adding enzyme type 1 subfamily.</text>
</comment>
<dbReference type="EC" id="2.7.7.72" evidence="1"/>
<dbReference type="EC" id="3.1.3.-" evidence="1"/>
<dbReference type="EC" id="3.1.4.-" evidence="1"/>
<dbReference type="EMBL" id="AE009442">
    <property type="protein sequence ID" value="AAO28474.1"/>
    <property type="molecule type" value="Genomic_DNA"/>
</dbReference>
<dbReference type="RefSeq" id="WP_004090647.1">
    <property type="nucleotide sequence ID" value="NC_004556.1"/>
</dbReference>
<dbReference type="SMR" id="Q87DS9"/>
<dbReference type="KEGG" id="xft:PD_0602"/>
<dbReference type="HOGENOM" id="CLU_015961_1_1_6"/>
<dbReference type="Proteomes" id="UP000002516">
    <property type="component" value="Chromosome"/>
</dbReference>
<dbReference type="GO" id="GO:0005524">
    <property type="term" value="F:ATP binding"/>
    <property type="evidence" value="ECO:0007669"/>
    <property type="project" value="UniProtKB-UniRule"/>
</dbReference>
<dbReference type="GO" id="GO:0004810">
    <property type="term" value="F:CCA tRNA nucleotidyltransferase activity"/>
    <property type="evidence" value="ECO:0007669"/>
    <property type="project" value="UniProtKB-UniRule"/>
</dbReference>
<dbReference type="GO" id="GO:0004112">
    <property type="term" value="F:cyclic-nucleotide phosphodiesterase activity"/>
    <property type="evidence" value="ECO:0007669"/>
    <property type="project" value="UniProtKB-UniRule"/>
</dbReference>
<dbReference type="GO" id="GO:0000287">
    <property type="term" value="F:magnesium ion binding"/>
    <property type="evidence" value="ECO:0007669"/>
    <property type="project" value="UniProtKB-UniRule"/>
</dbReference>
<dbReference type="GO" id="GO:0016791">
    <property type="term" value="F:phosphatase activity"/>
    <property type="evidence" value="ECO:0007669"/>
    <property type="project" value="UniProtKB-UniRule"/>
</dbReference>
<dbReference type="GO" id="GO:0000049">
    <property type="term" value="F:tRNA binding"/>
    <property type="evidence" value="ECO:0007669"/>
    <property type="project" value="UniProtKB-UniRule"/>
</dbReference>
<dbReference type="GO" id="GO:0042245">
    <property type="term" value="P:RNA repair"/>
    <property type="evidence" value="ECO:0007669"/>
    <property type="project" value="UniProtKB-KW"/>
</dbReference>
<dbReference type="GO" id="GO:0001680">
    <property type="term" value="P:tRNA 3'-terminal CCA addition"/>
    <property type="evidence" value="ECO:0007669"/>
    <property type="project" value="UniProtKB-UniRule"/>
</dbReference>
<dbReference type="CDD" id="cd05398">
    <property type="entry name" value="NT_ClassII-CCAase"/>
    <property type="match status" value="1"/>
</dbReference>
<dbReference type="Gene3D" id="3.30.460.10">
    <property type="entry name" value="Beta Polymerase, domain 2"/>
    <property type="match status" value="1"/>
</dbReference>
<dbReference type="Gene3D" id="1.10.3090.10">
    <property type="entry name" value="cca-adding enzyme, domain 2"/>
    <property type="match status" value="1"/>
</dbReference>
<dbReference type="HAMAP" id="MF_01261">
    <property type="entry name" value="CCA_bact_type1"/>
    <property type="match status" value="1"/>
</dbReference>
<dbReference type="InterPro" id="IPR012006">
    <property type="entry name" value="CCA_bact"/>
</dbReference>
<dbReference type="InterPro" id="IPR006674">
    <property type="entry name" value="HD_domain"/>
</dbReference>
<dbReference type="InterPro" id="IPR043519">
    <property type="entry name" value="NT_sf"/>
</dbReference>
<dbReference type="InterPro" id="IPR002646">
    <property type="entry name" value="PolA_pol_head_dom"/>
</dbReference>
<dbReference type="InterPro" id="IPR032828">
    <property type="entry name" value="PolyA_RNA-bd"/>
</dbReference>
<dbReference type="InterPro" id="IPR050124">
    <property type="entry name" value="tRNA_CCA-adding_enzyme"/>
</dbReference>
<dbReference type="NCBIfam" id="NF008137">
    <property type="entry name" value="PRK10885.1"/>
    <property type="match status" value="1"/>
</dbReference>
<dbReference type="PANTHER" id="PTHR47545">
    <property type="entry name" value="MULTIFUNCTIONAL CCA PROTEIN"/>
    <property type="match status" value="1"/>
</dbReference>
<dbReference type="PANTHER" id="PTHR47545:SF1">
    <property type="entry name" value="MULTIFUNCTIONAL CCA PROTEIN"/>
    <property type="match status" value="1"/>
</dbReference>
<dbReference type="Pfam" id="PF01743">
    <property type="entry name" value="PolyA_pol"/>
    <property type="match status" value="1"/>
</dbReference>
<dbReference type="Pfam" id="PF12627">
    <property type="entry name" value="PolyA_pol_RNAbd"/>
    <property type="match status" value="1"/>
</dbReference>
<dbReference type="PIRSF" id="PIRSF000813">
    <property type="entry name" value="CCA_bact"/>
    <property type="match status" value="1"/>
</dbReference>
<dbReference type="SUPFAM" id="SSF81301">
    <property type="entry name" value="Nucleotidyltransferase"/>
    <property type="match status" value="1"/>
</dbReference>
<dbReference type="SUPFAM" id="SSF81891">
    <property type="entry name" value="Poly A polymerase C-terminal region-like"/>
    <property type="match status" value="1"/>
</dbReference>
<dbReference type="PROSITE" id="PS51831">
    <property type="entry name" value="HD"/>
    <property type="match status" value="1"/>
</dbReference>
<protein>
    <recommendedName>
        <fullName evidence="1">Multifunctional CCA protein</fullName>
    </recommendedName>
    <domain>
        <recommendedName>
            <fullName evidence="1">CCA-adding enzyme</fullName>
            <ecNumber evidence="1">2.7.7.72</ecNumber>
        </recommendedName>
        <alternativeName>
            <fullName evidence="1">CCA tRNA nucleotidyltransferase</fullName>
        </alternativeName>
        <alternativeName>
            <fullName evidence="1">tRNA CCA-pyrophosphorylase</fullName>
        </alternativeName>
        <alternativeName>
            <fullName evidence="1">tRNA adenylyl-/cytidylyl-transferase</fullName>
        </alternativeName>
        <alternativeName>
            <fullName evidence="1">tRNA nucleotidyltransferase</fullName>
        </alternativeName>
        <alternativeName>
            <fullName evidence="1">tRNA-NT</fullName>
        </alternativeName>
    </domain>
    <domain>
        <recommendedName>
            <fullName evidence="1">2'-nucleotidase</fullName>
            <ecNumber evidence="1">3.1.3.-</ecNumber>
        </recommendedName>
    </domain>
    <domain>
        <recommendedName>
            <fullName evidence="1">2',3'-cyclic phosphodiesterase</fullName>
            <ecNumber evidence="1">3.1.4.-</ecNumber>
        </recommendedName>
    </domain>
    <domain>
        <recommendedName>
            <fullName evidence="1">Phosphatase</fullName>
            <ecNumber evidence="1">3.1.3.-</ecNumber>
        </recommendedName>
    </domain>
</protein>
<accession>Q87DS9</accession>
<proteinExistence type="inferred from homology"/>
<evidence type="ECO:0000255" key="1">
    <source>
        <dbReference type="HAMAP-Rule" id="MF_01261"/>
    </source>
</evidence>
<feature type="chain" id="PRO_0000139010" description="Multifunctional CCA protein">
    <location>
        <begin position="1"/>
        <end position="416"/>
    </location>
</feature>
<feature type="domain" description="HD" evidence="1">
    <location>
        <begin position="229"/>
        <end position="331"/>
    </location>
</feature>
<feature type="binding site" evidence="1">
    <location>
        <position position="8"/>
    </location>
    <ligand>
        <name>ATP</name>
        <dbReference type="ChEBI" id="CHEBI:30616"/>
    </ligand>
</feature>
<feature type="binding site" evidence="1">
    <location>
        <position position="8"/>
    </location>
    <ligand>
        <name>CTP</name>
        <dbReference type="ChEBI" id="CHEBI:37563"/>
    </ligand>
</feature>
<feature type="binding site" evidence="1">
    <location>
        <position position="11"/>
    </location>
    <ligand>
        <name>ATP</name>
        <dbReference type="ChEBI" id="CHEBI:30616"/>
    </ligand>
</feature>
<feature type="binding site" evidence="1">
    <location>
        <position position="11"/>
    </location>
    <ligand>
        <name>CTP</name>
        <dbReference type="ChEBI" id="CHEBI:37563"/>
    </ligand>
</feature>
<feature type="binding site" evidence="1">
    <location>
        <position position="21"/>
    </location>
    <ligand>
        <name>Mg(2+)</name>
        <dbReference type="ChEBI" id="CHEBI:18420"/>
    </ligand>
</feature>
<feature type="binding site" evidence="1">
    <location>
        <position position="23"/>
    </location>
    <ligand>
        <name>Mg(2+)</name>
        <dbReference type="ChEBI" id="CHEBI:18420"/>
    </ligand>
</feature>
<feature type="binding site" evidence="1">
    <location>
        <position position="91"/>
    </location>
    <ligand>
        <name>ATP</name>
        <dbReference type="ChEBI" id="CHEBI:30616"/>
    </ligand>
</feature>
<feature type="binding site" evidence="1">
    <location>
        <position position="91"/>
    </location>
    <ligand>
        <name>CTP</name>
        <dbReference type="ChEBI" id="CHEBI:37563"/>
    </ligand>
</feature>
<feature type="binding site" evidence="1">
    <location>
        <position position="138"/>
    </location>
    <ligand>
        <name>ATP</name>
        <dbReference type="ChEBI" id="CHEBI:30616"/>
    </ligand>
</feature>
<feature type="binding site" evidence="1">
    <location>
        <position position="138"/>
    </location>
    <ligand>
        <name>CTP</name>
        <dbReference type="ChEBI" id="CHEBI:37563"/>
    </ligand>
</feature>
<feature type="binding site" evidence="1">
    <location>
        <position position="141"/>
    </location>
    <ligand>
        <name>ATP</name>
        <dbReference type="ChEBI" id="CHEBI:30616"/>
    </ligand>
</feature>
<feature type="binding site" evidence="1">
    <location>
        <position position="141"/>
    </location>
    <ligand>
        <name>CTP</name>
        <dbReference type="ChEBI" id="CHEBI:37563"/>
    </ligand>
</feature>
<name>CCA_XYLFT</name>
<organism>
    <name type="scientific">Xylella fastidiosa (strain Temecula1 / ATCC 700964)</name>
    <dbReference type="NCBI Taxonomy" id="183190"/>
    <lineage>
        <taxon>Bacteria</taxon>
        <taxon>Pseudomonadati</taxon>
        <taxon>Pseudomonadota</taxon>
        <taxon>Gammaproteobacteria</taxon>
        <taxon>Lysobacterales</taxon>
        <taxon>Lysobacteraceae</taxon>
        <taxon>Xylella</taxon>
    </lineage>
</organism>
<sequence length="416" mass="46204">MKSYLVGGAVRDALLGQPAGDCDWVVVGADPAHMKSLGFKPVGRDFPVFLHPKTGEEFALARTERKNGHGYRGFIVNADPTVTLEQDLQRRDFTINAIARDQTNGTLIDPYGGVNDLEQRVLRHISPAFAEDPLRVLRAARFMARLAPLGFSIAPETLAMMRQMAANGELNSLIPERIWKELSRSLTYTQPAAFLHTLRTVNALEVVLPELNALYGVPQHADYHPEIDTGLHQELVSDIAAKLAPGDMLIGFAALCHDLGKALTPRATWPHHPMHEQRGMAPTQQLSERLKVPRNYQQLALIACREHLNVHRLSKLHDNTVYELLQRCDAFRRPERIAQLAIVCEADYRGRYGHEDANYPQGQHLCRLHAAALAINARDLNRQDLHGTQIGEALAQARIRAISSAGVYDGGTGTNF</sequence>
<reference key="1">
    <citation type="journal article" date="2003" name="J. Bacteriol.">
        <title>Comparative analyses of the complete genome sequences of Pierce's disease and citrus variegated chlorosis strains of Xylella fastidiosa.</title>
        <authorList>
            <person name="Van Sluys M.A."/>
            <person name="de Oliveira M.C."/>
            <person name="Monteiro-Vitorello C.B."/>
            <person name="Miyaki C.Y."/>
            <person name="Furlan L.R."/>
            <person name="Camargo L.E.A."/>
            <person name="da Silva A.C.R."/>
            <person name="Moon D.H."/>
            <person name="Takita M.A."/>
            <person name="Lemos E.G.M."/>
            <person name="Machado M.A."/>
            <person name="Ferro M.I.T."/>
            <person name="da Silva F.R."/>
            <person name="Goldman M.H.S."/>
            <person name="Goldman G.H."/>
            <person name="Lemos M.V.F."/>
            <person name="El-Dorry H."/>
            <person name="Tsai S.M."/>
            <person name="Carrer H."/>
            <person name="Carraro D.M."/>
            <person name="de Oliveira R.C."/>
            <person name="Nunes L.R."/>
            <person name="Siqueira W.J."/>
            <person name="Coutinho L.L."/>
            <person name="Kimura E.T."/>
            <person name="Ferro E.S."/>
            <person name="Harakava R."/>
            <person name="Kuramae E.E."/>
            <person name="Marino C.L."/>
            <person name="Giglioti E."/>
            <person name="Abreu I.L."/>
            <person name="Alves L.M.C."/>
            <person name="do Amaral A.M."/>
            <person name="Baia G.S."/>
            <person name="Blanco S.R."/>
            <person name="Brito M.S."/>
            <person name="Cannavan F.S."/>
            <person name="Celestino A.V."/>
            <person name="da Cunha A.F."/>
            <person name="Fenille R.C."/>
            <person name="Ferro J.A."/>
            <person name="Formighieri E.F."/>
            <person name="Kishi L.T."/>
            <person name="Leoni S.G."/>
            <person name="Oliveira A.R."/>
            <person name="Rosa V.E. Jr."/>
            <person name="Sassaki F.T."/>
            <person name="Sena J.A.D."/>
            <person name="de Souza A.A."/>
            <person name="Truffi D."/>
            <person name="Tsukumo F."/>
            <person name="Yanai G.M."/>
            <person name="Zaros L.G."/>
            <person name="Civerolo E.L."/>
            <person name="Simpson A.J.G."/>
            <person name="Almeida N.F. Jr."/>
            <person name="Setubal J.C."/>
            <person name="Kitajima J.P."/>
        </authorList>
    </citation>
    <scope>NUCLEOTIDE SEQUENCE [LARGE SCALE GENOMIC DNA]</scope>
    <source>
        <strain>Temecula1 / ATCC 700964</strain>
    </source>
</reference>